<name>BCHN_RHOCB</name>
<comment type="function">
    <text evidence="1 2 3">Component of the dark-operative protochlorophyllide reductase (DPOR) that uses Mg-ATP and reduced ferredoxin to reduce ring D of protochlorophyllide (Pchlide) to form chlorophyllide a (Chlide). This reaction is light-independent. The NB-protein (BchN-BchB) is the catalytic component of the complex.</text>
</comment>
<comment type="catalytic activity">
    <reaction evidence="1 2">
        <text>chlorophyllide a + oxidized 2[4Fe-4S]-[ferredoxin] + 2 ADP + 2 phosphate = protochlorophyllide a + reduced 2[4Fe-4S]-[ferredoxin] + 2 ATP + 2 H2O</text>
        <dbReference type="Rhea" id="RHEA:28202"/>
        <dbReference type="Rhea" id="RHEA-COMP:10002"/>
        <dbReference type="Rhea" id="RHEA-COMP:10004"/>
        <dbReference type="ChEBI" id="CHEBI:15377"/>
        <dbReference type="ChEBI" id="CHEBI:30616"/>
        <dbReference type="ChEBI" id="CHEBI:33722"/>
        <dbReference type="ChEBI" id="CHEBI:33723"/>
        <dbReference type="ChEBI" id="CHEBI:43474"/>
        <dbReference type="ChEBI" id="CHEBI:83348"/>
        <dbReference type="ChEBI" id="CHEBI:83350"/>
        <dbReference type="ChEBI" id="CHEBI:456216"/>
        <dbReference type="EC" id="1.3.7.7"/>
    </reaction>
</comment>
<comment type="cofactor">
    <cofactor evidence="1 3">
        <name>[4Fe-4S] cluster</name>
        <dbReference type="ChEBI" id="CHEBI:49883"/>
    </cofactor>
    <text evidence="1 3">Binds 1 [4Fe-4S] cluster per heterodimer (PubMed:20400946). The cluster is bound at the heterodimer interface by residues from both subunits (PubMed:20400946).</text>
</comment>
<comment type="pathway">
    <text evidence="1">Porphyrin-containing compound metabolism; bacteriochlorophyll biosynthesis (light-independent).</text>
</comment>
<comment type="subunit">
    <text evidence="1 3">Protochlorophyllide reductase is composed of three subunits; BchL, BchN and BchB. Forms a heterotetramer of two BchB and two BchN subunits (PubMed:20400946).</text>
</comment>
<comment type="interaction">
    <interactant intactId="EBI-9017544">
        <id>P26164</id>
    </interactant>
    <interactant intactId="EBI-9017546">
        <id>P26163</id>
        <label>bchB</label>
    </interactant>
    <organismsDiffer>false</organismsDiffer>
    <experiments>3</experiments>
</comment>
<comment type="similarity">
    <text evidence="1">Belongs to the BchN/ChlN family.</text>
</comment>
<organism>
    <name type="scientific">Rhodobacter capsulatus (strain ATCC BAA-309 / NBRC 16581 / SB1003)</name>
    <dbReference type="NCBI Taxonomy" id="272942"/>
    <lineage>
        <taxon>Bacteria</taxon>
        <taxon>Pseudomonadati</taxon>
        <taxon>Pseudomonadota</taxon>
        <taxon>Alphaproteobacteria</taxon>
        <taxon>Rhodobacterales</taxon>
        <taxon>Rhodobacter group</taxon>
        <taxon>Rhodobacter</taxon>
    </lineage>
</organism>
<keyword id="KW-0002">3D-structure</keyword>
<keyword id="KW-0004">4Fe-4S</keyword>
<keyword id="KW-0067">ATP-binding</keyword>
<keyword id="KW-0077">Bacteriochlorophyll biosynthesis</keyword>
<keyword id="KW-0149">Chlorophyll biosynthesis</keyword>
<keyword id="KW-0408">Iron</keyword>
<keyword id="KW-0411">Iron-sulfur</keyword>
<keyword id="KW-0479">Metal-binding</keyword>
<keyword id="KW-0547">Nucleotide-binding</keyword>
<keyword id="KW-0560">Oxidoreductase</keyword>
<keyword id="KW-0602">Photosynthesis</keyword>
<keyword id="KW-1185">Reference proteome</keyword>
<protein>
    <recommendedName>
        <fullName evidence="1">Light-independent protochlorophyllide reductase subunit N</fullName>
        <shortName evidence="1">DPOR subunit N</shortName>
        <shortName evidence="1">LI-POR subunit N</shortName>
        <ecNumber evidence="1 2">1.3.7.7</ecNumber>
    </recommendedName>
</protein>
<feature type="chain" id="PRO_0000208596" description="Light-independent protochlorophyllide reductase subunit N">
    <location>
        <begin position="1"/>
        <end position="424"/>
    </location>
</feature>
<feature type="binding site" evidence="3">
    <location>
        <position position="26"/>
    </location>
    <ligand>
        <name>[4Fe-4S] cluster</name>
        <dbReference type="ChEBI" id="CHEBI:49883"/>
        <note>ligand shared with heterodimeric partner</note>
    </ligand>
</feature>
<feature type="binding site" evidence="3">
    <location>
        <position position="51"/>
    </location>
    <ligand>
        <name>[4Fe-4S] cluster</name>
        <dbReference type="ChEBI" id="CHEBI:49883"/>
        <note>ligand shared with heterodimeric partner</note>
    </ligand>
</feature>
<feature type="binding site" evidence="3">
    <location>
        <position position="112"/>
    </location>
    <ligand>
        <name>[4Fe-4S] cluster</name>
        <dbReference type="ChEBI" id="CHEBI:49883"/>
        <note>ligand shared with heterodimeric partner</note>
    </ligand>
</feature>
<feature type="mutagenesis site" description="Retains 50% activity." evidence="3">
    <original>F</original>
    <variation>A</variation>
    <location>
        <position position="25"/>
    </location>
</feature>
<feature type="mutagenesis site" description="Does not form heterotetramers." evidence="3">
    <original>C</original>
    <variation>A</variation>
    <location>
        <position position="26"/>
    </location>
</feature>
<feature type="mutagenesis site" description="Does not form heterotetramers." evidence="3">
    <original>C</original>
    <variation>A</variation>
    <location>
        <position position="51"/>
    </location>
</feature>
<feature type="mutagenesis site" description="Does not form heterotetramers." evidence="3">
    <original>C</original>
    <variation>A</variation>
    <location>
        <position position="112"/>
    </location>
</feature>
<feature type="strand" evidence="5">
    <location>
        <begin position="11"/>
        <end position="13"/>
    </location>
</feature>
<feature type="strand" evidence="4">
    <location>
        <begin position="15"/>
        <end position="18"/>
    </location>
</feature>
<feature type="helix" evidence="4">
    <location>
        <begin position="27"/>
        <end position="30"/>
    </location>
</feature>
<feature type="helix" evidence="4">
    <location>
        <begin position="31"/>
        <end position="37"/>
    </location>
</feature>
<feature type="strand" evidence="4">
    <location>
        <begin position="41"/>
        <end position="47"/>
    </location>
</feature>
<feature type="helix" evidence="4">
    <location>
        <begin position="49"/>
        <end position="59"/>
    </location>
</feature>
<feature type="helix" evidence="4">
    <location>
        <begin position="60"/>
        <end position="64"/>
    </location>
</feature>
<feature type="strand" evidence="4">
    <location>
        <begin position="68"/>
        <end position="73"/>
    </location>
</feature>
<feature type="helix" evidence="4">
    <location>
        <begin position="76"/>
        <end position="79"/>
    </location>
</feature>
<feature type="strand" evidence="4">
    <location>
        <begin position="80"/>
        <end position="82"/>
    </location>
</feature>
<feature type="helix" evidence="4">
    <location>
        <begin position="85"/>
        <end position="98"/>
    </location>
</feature>
<feature type="strand" evidence="4">
    <location>
        <begin position="105"/>
        <end position="110"/>
    </location>
</feature>
<feature type="helix" evidence="4">
    <location>
        <begin position="112"/>
        <end position="116"/>
    </location>
</feature>
<feature type="helix" evidence="4">
    <location>
        <begin position="121"/>
        <end position="131"/>
    </location>
</feature>
<feature type="turn" evidence="4">
    <location>
        <begin position="133"/>
        <end position="135"/>
    </location>
</feature>
<feature type="strand" evidence="4">
    <location>
        <begin position="137"/>
        <end position="142"/>
    </location>
</feature>
<feature type="turn" evidence="4">
    <location>
        <begin position="145"/>
        <end position="147"/>
    </location>
</feature>
<feature type="helix" evidence="4">
    <location>
        <begin position="152"/>
        <end position="161"/>
    </location>
</feature>
<feature type="helix" evidence="4">
    <location>
        <begin position="162"/>
        <end position="164"/>
    </location>
</feature>
<feature type="strand" evidence="4">
    <location>
        <begin position="173"/>
        <end position="177"/>
    </location>
</feature>
<feature type="helix" evidence="4">
    <location>
        <begin position="181"/>
        <end position="193"/>
    </location>
</feature>
<feature type="strand" evidence="4">
    <location>
        <begin position="199"/>
        <end position="203"/>
    </location>
</feature>
<feature type="helix" evidence="4">
    <location>
        <begin position="207"/>
        <end position="209"/>
    </location>
</feature>
<feature type="strand" evidence="4">
    <location>
        <begin position="218"/>
        <end position="223"/>
    </location>
</feature>
<feature type="helix" evidence="4">
    <location>
        <begin position="227"/>
        <end position="235"/>
    </location>
</feature>
<feature type="strand" evidence="6">
    <location>
        <begin position="239"/>
        <end position="241"/>
    </location>
</feature>
<feature type="helix" evidence="4">
    <location>
        <begin position="248"/>
        <end position="262"/>
    </location>
</feature>
<feature type="helix" evidence="4">
    <location>
        <begin position="267"/>
        <end position="286"/>
    </location>
</feature>
<feature type="helix" evidence="4">
    <location>
        <begin position="289"/>
        <end position="292"/>
    </location>
</feature>
<feature type="strand" evidence="4">
    <location>
        <begin position="296"/>
        <end position="299"/>
    </location>
</feature>
<feature type="strand" evidence="4">
    <location>
        <begin position="301"/>
        <end position="304"/>
    </location>
</feature>
<feature type="helix" evidence="4">
    <location>
        <begin position="306"/>
        <end position="315"/>
    </location>
</feature>
<feature type="strand" evidence="4">
    <location>
        <begin position="320"/>
        <end position="327"/>
    </location>
</feature>
<feature type="helix" evidence="4">
    <location>
        <begin position="331"/>
        <end position="338"/>
    </location>
</feature>
<feature type="strand" evidence="4">
    <location>
        <begin position="346"/>
        <end position="350"/>
    </location>
</feature>
<feature type="helix" evidence="4">
    <location>
        <begin position="353"/>
        <end position="363"/>
    </location>
</feature>
<feature type="strand" evidence="4">
    <location>
        <begin position="366"/>
        <end position="370"/>
    </location>
</feature>
<feature type="helix" evidence="4">
    <location>
        <begin position="372"/>
        <end position="379"/>
    </location>
</feature>
<feature type="turn" evidence="4">
    <location>
        <begin position="380"/>
        <end position="382"/>
    </location>
</feature>
<feature type="strand" evidence="4">
    <location>
        <begin position="385"/>
        <end position="387"/>
    </location>
</feature>
<feature type="helix" evidence="4">
    <location>
        <begin position="388"/>
        <end position="391"/>
    </location>
</feature>
<feature type="strand" evidence="4">
    <location>
        <begin position="397"/>
        <end position="399"/>
    </location>
</feature>
<feature type="helix" evidence="4">
    <location>
        <begin position="402"/>
        <end position="420"/>
    </location>
</feature>
<gene>
    <name evidence="1" type="primary">bchN</name>
    <name type="ordered locus">RCAP_rcc00665</name>
</gene>
<accession>P26164</accession>
<accession>D5ANS6</accession>
<sequence>MSLDSPTFGCTDSPVRRERGQKAVFCGLTSIVWLHRKMQDAFFLVVGSRTCAHLLQAAAGVMIFAEPRFGTAVLEEQDLAGLADAHKELDREVAKLLERRPDIRQLFLVGSCPSEVLKLDLDRAAERLSGLHAPHVRVYSYTGSGLDTTFTQGEDTCLAAMVPTLDTTEAAELIVVGALPDVVEDQCLSLLTQLGVGPVRMLPARRSDIEPAVGPNTRFILAQPFLGETTGALERRGAKRIAAPFPFGEEGTTLWLKAVADAYGVSAEKFEAVTAAPRARAKKAIAAHLETLTGKSLFMFPDSQLEIPLARFLARECGMKTTEIATPFLHKAIMAPDLALLPSNTALTEGQDLEAQLDRHEAINPDLTVCGLGLANPLEAKGHATKWAIELVFTPVHFYEQAGDLAGLFSRPLRRRALLNGGAA</sequence>
<evidence type="ECO:0000255" key="1">
    <source>
        <dbReference type="HAMAP-Rule" id="MF_00352"/>
    </source>
</evidence>
<evidence type="ECO:0000269" key="2">
    <source>
    </source>
</evidence>
<evidence type="ECO:0000269" key="3">
    <source>
    </source>
</evidence>
<evidence type="ECO:0007829" key="4">
    <source>
        <dbReference type="PDB" id="3AEK"/>
    </source>
</evidence>
<evidence type="ECO:0007829" key="5">
    <source>
        <dbReference type="PDB" id="3AEQ"/>
    </source>
</evidence>
<evidence type="ECO:0007829" key="6">
    <source>
        <dbReference type="PDB" id="3AER"/>
    </source>
</evidence>
<proteinExistence type="evidence at protein level"/>
<reference key="1">
    <citation type="journal article" date="1993" name="J. Bacteriol.">
        <title>bchFNBH bacteriochlorophyll synthesis genes of Rhodobacter capsulatus and identification of the third subunit of light-independent protochlorophyllide reductase in bacteria and plants.</title>
        <authorList>
            <person name="Burke D.H."/>
            <person name="Alberti M."/>
            <person name="Hearst J.E."/>
        </authorList>
    </citation>
    <scope>NUCLEOTIDE SEQUENCE [GENOMIC DNA]</scope>
    <source>
        <strain>ATCC BAA-309 / NBRC 16581 / SB1003</strain>
    </source>
</reference>
<reference key="2">
    <citation type="journal article" date="2010" name="J. Bacteriol.">
        <title>Complete genome sequence of the photosynthetic purple nonsulfur bacterium Rhodobacter capsulatus SB 1003.</title>
        <authorList>
            <person name="Strnad H."/>
            <person name="Lapidus A."/>
            <person name="Paces J."/>
            <person name="Ulbrich P."/>
            <person name="Vlcek C."/>
            <person name="Paces V."/>
            <person name="Haselkorn R."/>
        </authorList>
    </citation>
    <scope>NUCLEOTIDE SEQUENCE [LARGE SCALE GENOMIC DNA]</scope>
    <source>
        <strain>ATCC BAA-309 / NBRC 16581 / SB1003</strain>
    </source>
</reference>
<reference key="3">
    <citation type="journal article" date="2000" name="J. Biol. Chem.">
        <title>Reconstitution of light-independent protochlorophyllide reductase from purified bchL and bchN-bchB subunits. In vitro confirmation of nitrogenase-like features of a bacteriochlorophyll biosynthesis enzyme.</title>
        <authorList>
            <person name="Fujita Y."/>
            <person name="Bauer C.E."/>
        </authorList>
    </citation>
    <scope>CHARACTERIZATION</scope>
    <source>
        <strain>SB1003 / CB1029</strain>
    </source>
</reference>
<reference key="4">
    <citation type="unpublished observations" date="2001-07">
        <authorList>
            <person name="Fujita Y."/>
        </authorList>
    </citation>
    <scope>CHARACTERIZATION</scope>
</reference>
<reference key="5">
    <citation type="journal article" date="2008" name="FEBS Lett.">
        <title>NB-protein (BchN-BchB) of dark-operative protochlorophyllide reductase is the catalytic component containing oxygen-tolerant Fe-S clusters.</title>
        <authorList>
            <person name="Nomata J."/>
            <person name="Ogawa T."/>
            <person name="Kitashima M."/>
            <person name="Inoue K."/>
            <person name="Fujita Y."/>
        </authorList>
    </citation>
    <scope>FUNCTION</scope>
    <scope>CATALYTIC ACTIVITY</scope>
</reference>
<reference key="6">
    <citation type="journal article" date="2010" name="Nature">
        <title>X-ray crystal structure of the light-independent protochlorophyllide reductase.</title>
        <authorList>
            <person name="Muraki N."/>
            <person name="Nomata J."/>
            <person name="Ebata K."/>
            <person name="Mizoguchi T."/>
            <person name="Shiba T."/>
            <person name="Tamiaki H."/>
            <person name="Kurisu G."/>
            <person name="Fujita Y."/>
        </authorList>
    </citation>
    <scope>X-RAY CRYSTALLOGRAPHY (2.3 ANGSTROMS) IN COMPLEX WITH BCHB SUBUNIT AND 4FE-4S CLUSTER</scope>
    <scope>FUNCTION</scope>
    <scope>SUBUNIT</scope>
    <scope>COFACTOR</scope>
    <scope>REACTION MECHANISM</scope>
    <scope>MUTAGENESIS OF PHE-25; CYS-26; CYS-51 AND CYS-112</scope>
</reference>
<dbReference type="EC" id="1.3.7.7" evidence="1 2"/>
<dbReference type="EMBL" id="Z11165">
    <property type="protein sequence ID" value="CAA77526.1"/>
    <property type="molecule type" value="Genomic_DNA"/>
</dbReference>
<dbReference type="EMBL" id="CP001312">
    <property type="protein sequence ID" value="ADE84430.1"/>
    <property type="molecule type" value="Genomic_DNA"/>
</dbReference>
<dbReference type="PIR" id="B49851">
    <property type="entry name" value="B49851"/>
</dbReference>
<dbReference type="RefSeq" id="WP_013066409.1">
    <property type="nucleotide sequence ID" value="NC_014034.1"/>
</dbReference>
<dbReference type="PDB" id="3AEK">
    <property type="method" value="X-ray"/>
    <property type="resolution" value="2.30 A"/>
    <property type="chains" value="A/C=2-424"/>
</dbReference>
<dbReference type="PDB" id="3AEQ">
    <property type="method" value="X-ray"/>
    <property type="resolution" value="2.90 A"/>
    <property type="chains" value="A/C=2-424"/>
</dbReference>
<dbReference type="PDB" id="3AER">
    <property type="method" value="X-ray"/>
    <property type="resolution" value="2.80 A"/>
    <property type="chains" value="A/C=2-424"/>
</dbReference>
<dbReference type="PDB" id="3AES">
    <property type="method" value="X-ray"/>
    <property type="resolution" value="2.50 A"/>
    <property type="chains" value="A/C=2-424"/>
</dbReference>
<dbReference type="PDB" id="3AET">
    <property type="method" value="X-ray"/>
    <property type="resolution" value="2.91 A"/>
    <property type="chains" value="A/C=2-424"/>
</dbReference>
<dbReference type="PDB" id="3AEU">
    <property type="method" value="X-ray"/>
    <property type="resolution" value="2.90 A"/>
    <property type="chains" value="A/C=2-424"/>
</dbReference>
<dbReference type="PDBsum" id="3AEK"/>
<dbReference type="PDBsum" id="3AEQ"/>
<dbReference type="PDBsum" id="3AER"/>
<dbReference type="PDBsum" id="3AES"/>
<dbReference type="PDBsum" id="3AET"/>
<dbReference type="PDBsum" id="3AEU"/>
<dbReference type="SMR" id="P26164"/>
<dbReference type="DIP" id="DIP-59277N"/>
<dbReference type="IntAct" id="P26164">
    <property type="interactions" value="1"/>
</dbReference>
<dbReference type="STRING" id="272942.RCAP_rcc00665"/>
<dbReference type="GeneID" id="31489611"/>
<dbReference type="KEGG" id="rcp:RCAP_rcc00665"/>
<dbReference type="eggNOG" id="COG2710">
    <property type="taxonomic scope" value="Bacteria"/>
</dbReference>
<dbReference type="HOGENOM" id="CLU_037170_0_0_5"/>
<dbReference type="OrthoDB" id="5714774at2"/>
<dbReference type="BioCyc" id="MetaCyc:MONOMER-13269"/>
<dbReference type="BRENDA" id="1.3.7.7">
    <property type="organism ID" value="5381"/>
</dbReference>
<dbReference type="UniPathway" id="UPA00671"/>
<dbReference type="EvolutionaryTrace" id="P26164"/>
<dbReference type="Proteomes" id="UP000002361">
    <property type="component" value="Chromosome"/>
</dbReference>
<dbReference type="GO" id="GO:0051539">
    <property type="term" value="F:4 iron, 4 sulfur cluster binding"/>
    <property type="evidence" value="ECO:0007669"/>
    <property type="project" value="UniProtKB-UniRule"/>
</dbReference>
<dbReference type="GO" id="GO:0005524">
    <property type="term" value="F:ATP binding"/>
    <property type="evidence" value="ECO:0007669"/>
    <property type="project" value="UniProtKB-UniRule"/>
</dbReference>
<dbReference type="GO" id="GO:0046872">
    <property type="term" value="F:metal ion binding"/>
    <property type="evidence" value="ECO:0007669"/>
    <property type="project" value="UniProtKB-KW"/>
</dbReference>
<dbReference type="GO" id="GO:0016730">
    <property type="term" value="F:oxidoreductase activity, acting on iron-sulfur proteins as donors"/>
    <property type="evidence" value="ECO:0007669"/>
    <property type="project" value="InterPro"/>
</dbReference>
<dbReference type="GO" id="GO:0016636">
    <property type="term" value="F:oxidoreductase activity, acting on the CH-CH group of donors, iron-sulfur protein as acceptor"/>
    <property type="evidence" value="ECO:0007669"/>
    <property type="project" value="UniProtKB-UniRule"/>
</dbReference>
<dbReference type="GO" id="GO:0036070">
    <property type="term" value="P:light-independent bacteriochlorophyll biosynthetic process"/>
    <property type="evidence" value="ECO:0007669"/>
    <property type="project" value="UniProtKB-UniRule"/>
</dbReference>
<dbReference type="GO" id="GO:0019685">
    <property type="term" value="P:photosynthesis, dark reaction"/>
    <property type="evidence" value="ECO:0007669"/>
    <property type="project" value="InterPro"/>
</dbReference>
<dbReference type="Gene3D" id="3.40.50.1980">
    <property type="entry name" value="Nitrogenase molybdenum iron protein domain"/>
    <property type="match status" value="3"/>
</dbReference>
<dbReference type="HAMAP" id="MF_00352">
    <property type="entry name" value="ChlN_BchN"/>
    <property type="match status" value="1"/>
</dbReference>
<dbReference type="InterPro" id="IPR050293">
    <property type="entry name" value="LIPOR_BchN/ChlN"/>
</dbReference>
<dbReference type="InterPro" id="IPR000510">
    <property type="entry name" value="Nase/OxRdtase_comp1"/>
</dbReference>
<dbReference type="InterPro" id="IPR005970">
    <property type="entry name" value="Protochl_reductN"/>
</dbReference>
<dbReference type="NCBIfam" id="TIGR01279">
    <property type="entry name" value="DPOR_bchN"/>
    <property type="match status" value="1"/>
</dbReference>
<dbReference type="NCBIfam" id="NF002768">
    <property type="entry name" value="PRK02842.1"/>
    <property type="match status" value="1"/>
</dbReference>
<dbReference type="PANTHER" id="PTHR39429">
    <property type="entry name" value="LIGHT-INDEPENDENT PROTOCHLOROPHYLLIDE REDUCTASE SUBUNIT N"/>
    <property type="match status" value="1"/>
</dbReference>
<dbReference type="PANTHER" id="PTHR39429:SF3">
    <property type="entry name" value="LIGHT-INDEPENDENT PROTOCHLOROPHYLLIDE REDUCTASE SUBUNIT N"/>
    <property type="match status" value="1"/>
</dbReference>
<dbReference type="Pfam" id="PF00148">
    <property type="entry name" value="Oxidored_nitro"/>
    <property type="match status" value="1"/>
</dbReference>
<dbReference type="PIRSF" id="PIRSF000162">
    <property type="entry name" value="P_chlorophyll_rd"/>
    <property type="match status" value="1"/>
</dbReference>
<dbReference type="SUPFAM" id="SSF53807">
    <property type="entry name" value="Helical backbone' metal receptor"/>
    <property type="match status" value="1"/>
</dbReference>